<comment type="subunit">
    <text evidence="1">Homotetramer.</text>
</comment>
<comment type="subcellular location">
    <subcellularLocation>
        <location evidence="2">Cytoplasm</location>
    </subcellularLocation>
</comment>
<comment type="similarity">
    <text evidence="2">Belongs to the DapA family.</text>
</comment>
<feature type="chain" id="PRO_0000103204" description="Uncharacterized DapA-like lyase PF0657">
    <location>
        <begin position="1"/>
        <end position="298"/>
    </location>
</feature>
<feature type="active site" description="Charge relay system" evidence="1">
    <location>
        <position position="43"/>
    </location>
</feature>
<feature type="active site" description="Charge relay system" evidence="1">
    <location>
        <position position="105"/>
    </location>
</feature>
<feature type="active site" description="Proton donor" evidence="1">
    <location>
        <position position="131"/>
    </location>
</feature>
<feature type="active site" description="Schiff-base intermediate with substrate" evidence="1">
    <location>
        <position position="159"/>
    </location>
</feature>
<evidence type="ECO:0000250" key="1"/>
<evidence type="ECO:0000305" key="2"/>
<organism>
    <name type="scientific">Pyrococcus furiosus (strain ATCC 43587 / DSM 3638 / JCM 8422 / Vc1)</name>
    <dbReference type="NCBI Taxonomy" id="186497"/>
    <lineage>
        <taxon>Archaea</taxon>
        <taxon>Methanobacteriati</taxon>
        <taxon>Methanobacteriota</taxon>
        <taxon>Thermococci</taxon>
        <taxon>Thermococcales</taxon>
        <taxon>Thermococcaceae</taxon>
        <taxon>Pyrococcus</taxon>
    </lineage>
</organism>
<proteinExistence type="inferred from homology"/>
<dbReference type="EC" id="4.-.-.-"/>
<dbReference type="EMBL" id="AE009950">
    <property type="protein sequence ID" value="AAL80781.1"/>
    <property type="molecule type" value="Genomic_DNA"/>
</dbReference>
<dbReference type="RefSeq" id="WP_011011778.1">
    <property type="nucleotide sequence ID" value="NZ_CP023154.1"/>
</dbReference>
<dbReference type="SMR" id="Q8U319"/>
<dbReference type="STRING" id="186497.PF0657"/>
<dbReference type="PaxDb" id="186497-PF0657"/>
<dbReference type="KEGG" id="pfu:PF0657"/>
<dbReference type="PATRIC" id="fig|186497.12.peg.690"/>
<dbReference type="eggNOG" id="arCOG04172">
    <property type="taxonomic scope" value="Archaea"/>
</dbReference>
<dbReference type="HOGENOM" id="CLU_049343_5_1_2"/>
<dbReference type="OrthoDB" id="33636at2157"/>
<dbReference type="PhylomeDB" id="Q8U319"/>
<dbReference type="Proteomes" id="UP000001013">
    <property type="component" value="Chromosome"/>
</dbReference>
<dbReference type="GO" id="GO:0005737">
    <property type="term" value="C:cytoplasm"/>
    <property type="evidence" value="ECO:0007669"/>
    <property type="project" value="UniProtKB-SubCell"/>
</dbReference>
<dbReference type="GO" id="GO:0008675">
    <property type="term" value="F:2-dehydro-3-deoxy-phosphogluconate aldolase activity"/>
    <property type="evidence" value="ECO:0007669"/>
    <property type="project" value="UniProtKB-ARBA"/>
</dbReference>
<dbReference type="GO" id="GO:0008840">
    <property type="term" value="F:4-hydroxy-tetrahydrodipicolinate synthase activity"/>
    <property type="evidence" value="ECO:0007669"/>
    <property type="project" value="TreeGrafter"/>
</dbReference>
<dbReference type="GO" id="GO:0044281">
    <property type="term" value="P:small molecule metabolic process"/>
    <property type="evidence" value="ECO:0007669"/>
    <property type="project" value="UniProtKB-ARBA"/>
</dbReference>
<dbReference type="CDD" id="cd00408">
    <property type="entry name" value="DHDPS-like"/>
    <property type="match status" value="1"/>
</dbReference>
<dbReference type="Gene3D" id="3.20.20.70">
    <property type="entry name" value="Aldolase class I"/>
    <property type="match status" value="1"/>
</dbReference>
<dbReference type="InterPro" id="IPR013785">
    <property type="entry name" value="Aldolase_TIM"/>
</dbReference>
<dbReference type="InterPro" id="IPR002220">
    <property type="entry name" value="DapA-like"/>
</dbReference>
<dbReference type="InterPro" id="IPR020625">
    <property type="entry name" value="Schiff_base-form_aldolases_AS"/>
</dbReference>
<dbReference type="PANTHER" id="PTHR12128:SF66">
    <property type="entry name" value="4-HYDROXY-2-OXOGLUTARATE ALDOLASE, MITOCHONDRIAL"/>
    <property type="match status" value="1"/>
</dbReference>
<dbReference type="PANTHER" id="PTHR12128">
    <property type="entry name" value="DIHYDRODIPICOLINATE SYNTHASE"/>
    <property type="match status" value="1"/>
</dbReference>
<dbReference type="Pfam" id="PF00701">
    <property type="entry name" value="DHDPS"/>
    <property type="match status" value="1"/>
</dbReference>
<dbReference type="PIRSF" id="PIRSF001365">
    <property type="entry name" value="DHDPS"/>
    <property type="match status" value="1"/>
</dbReference>
<dbReference type="PRINTS" id="PR00146">
    <property type="entry name" value="DHPICSNTHASE"/>
</dbReference>
<dbReference type="SMART" id="SM01130">
    <property type="entry name" value="DHDPS"/>
    <property type="match status" value="1"/>
</dbReference>
<dbReference type="SUPFAM" id="SSF51569">
    <property type="entry name" value="Aldolase"/>
    <property type="match status" value="1"/>
</dbReference>
<dbReference type="PROSITE" id="PS00666">
    <property type="entry name" value="DHDPS_2"/>
    <property type="match status" value="1"/>
</dbReference>
<reference key="1">
    <citation type="journal article" date="1999" name="Genetics">
        <title>Divergence of the hyperthermophilic archaea Pyrococcus furiosus and P. horikoshii inferred from complete genomic sequences.</title>
        <authorList>
            <person name="Maeder D.L."/>
            <person name="Weiss R.B."/>
            <person name="Dunn D.M."/>
            <person name="Cherry J.L."/>
            <person name="Gonzalez J.M."/>
            <person name="DiRuggiero J."/>
            <person name="Robb F.T."/>
        </authorList>
    </citation>
    <scope>NUCLEOTIDE SEQUENCE [LARGE SCALE GENOMIC DNA]</scope>
    <source>
        <strain>ATCC 43587 / DSM 3638 / JCM 8422 / Vc1</strain>
    </source>
</reference>
<sequence>MEGVIVPLVTPFKEDYSIDFEALEWHIEFLEDKGVHGIFTNSTTGEFTSLSFEEKKLLAEKGRELTSKAYYLVGTGSTNTFEVIELTKHAKDIGADATVIVSPYYCKLKDEAIFRHFSIVAERADIPIILYAIPSCANPINVEIVRKLALEHSNIIGIKASVDSLTYLGELLEVKEERKDFKVFTGLDQYFFTLLTLGGDGGIMACANFAPEIHLEIWNAFKEKNFRRAIELARELVRITKIYKIASSFASAVKLAMVAKGFPIRPVLRPPYVIDGEEVFNEIREIVEWRQMLRKESL</sequence>
<accession>Q8U319</accession>
<protein>
    <recommendedName>
        <fullName>Uncharacterized DapA-like lyase PF0657</fullName>
        <ecNumber>4.-.-.-</ecNumber>
    </recommendedName>
</protein>
<gene>
    <name type="primary">dapAL</name>
    <name type="ordered locus">PF0657</name>
</gene>
<keyword id="KW-0963">Cytoplasm</keyword>
<keyword id="KW-0456">Lyase</keyword>
<keyword id="KW-1185">Reference proteome</keyword>
<keyword id="KW-0704">Schiff base</keyword>
<name>DAPAL_PYRFU</name>